<name>FOLD_ACIET</name>
<comment type="function">
    <text evidence="1">Catalyzes the oxidation of 5,10-methylenetetrahydrofolate to 5,10-methenyltetrahydrofolate and then the hydrolysis of 5,10-methenyltetrahydrofolate to 10-formyltetrahydrofolate.</text>
</comment>
<comment type="catalytic activity">
    <reaction evidence="1">
        <text>(6R)-5,10-methylene-5,6,7,8-tetrahydrofolate + NADP(+) = (6R)-5,10-methenyltetrahydrofolate + NADPH</text>
        <dbReference type="Rhea" id="RHEA:22812"/>
        <dbReference type="ChEBI" id="CHEBI:15636"/>
        <dbReference type="ChEBI" id="CHEBI:57455"/>
        <dbReference type="ChEBI" id="CHEBI:57783"/>
        <dbReference type="ChEBI" id="CHEBI:58349"/>
        <dbReference type="EC" id="1.5.1.5"/>
    </reaction>
</comment>
<comment type="catalytic activity">
    <reaction evidence="1">
        <text>(6R)-5,10-methenyltetrahydrofolate + H2O = (6R)-10-formyltetrahydrofolate + H(+)</text>
        <dbReference type="Rhea" id="RHEA:23700"/>
        <dbReference type="ChEBI" id="CHEBI:15377"/>
        <dbReference type="ChEBI" id="CHEBI:15378"/>
        <dbReference type="ChEBI" id="CHEBI:57455"/>
        <dbReference type="ChEBI" id="CHEBI:195366"/>
        <dbReference type="EC" id="3.5.4.9"/>
    </reaction>
</comment>
<comment type="pathway">
    <text evidence="1">One-carbon metabolism; tetrahydrofolate interconversion.</text>
</comment>
<comment type="subunit">
    <text evidence="1">Homodimer.</text>
</comment>
<comment type="similarity">
    <text evidence="1">Belongs to the tetrahydrofolate dehydrogenase/cyclohydrolase family.</text>
</comment>
<keyword id="KW-0028">Amino-acid biosynthesis</keyword>
<keyword id="KW-0368">Histidine biosynthesis</keyword>
<keyword id="KW-0378">Hydrolase</keyword>
<keyword id="KW-0486">Methionine biosynthesis</keyword>
<keyword id="KW-0511">Multifunctional enzyme</keyword>
<keyword id="KW-0521">NADP</keyword>
<keyword id="KW-0554">One-carbon metabolism</keyword>
<keyword id="KW-0560">Oxidoreductase</keyword>
<keyword id="KW-0658">Purine biosynthesis</keyword>
<keyword id="KW-1185">Reference proteome</keyword>
<reference key="1">
    <citation type="submission" date="2009-01" db="EMBL/GenBank/DDBJ databases">
        <title>Complete sequence of Diaphorobacter sp. TPSY.</title>
        <authorList>
            <consortium name="US DOE Joint Genome Institute"/>
            <person name="Lucas S."/>
            <person name="Copeland A."/>
            <person name="Lapidus A."/>
            <person name="Glavina del Rio T."/>
            <person name="Tice H."/>
            <person name="Bruce D."/>
            <person name="Goodwin L."/>
            <person name="Pitluck S."/>
            <person name="Chertkov O."/>
            <person name="Brettin T."/>
            <person name="Detter J.C."/>
            <person name="Han C."/>
            <person name="Larimer F."/>
            <person name="Land M."/>
            <person name="Hauser L."/>
            <person name="Kyrpides N."/>
            <person name="Mikhailova N."/>
            <person name="Coates J.D."/>
        </authorList>
    </citation>
    <scope>NUCLEOTIDE SEQUENCE [LARGE SCALE GENOMIC DNA]</scope>
    <source>
        <strain>TPSY</strain>
    </source>
</reference>
<protein>
    <recommendedName>
        <fullName evidence="1">Bifunctional protein FolD</fullName>
    </recommendedName>
    <domain>
        <recommendedName>
            <fullName evidence="1">Methylenetetrahydrofolate dehydrogenase</fullName>
            <ecNumber evidence="1">1.5.1.5</ecNumber>
        </recommendedName>
    </domain>
    <domain>
        <recommendedName>
            <fullName evidence="1">Methenyltetrahydrofolate cyclohydrolase</fullName>
            <ecNumber evidence="1">3.5.4.9</ecNumber>
        </recommendedName>
    </domain>
</protein>
<dbReference type="EC" id="1.5.1.5" evidence="1"/>
<dbReference type="EC" id="3.5.4.9" evidence="1"/>
<dbReference type="EMBL" id="CP001392">
    <property type="protein sequence ID" value="ACM33112.1"/>
    <property type="molecule type" value="Genomic_DNA"/>
</dbReference>
<dbReference type="RefSeq" id="WP_015913203.1">
    <property type="nucleotide sequence ID" value="NC_011992.1"/>
</dbReference>
<dbReference type="SMR" id="B9MIU6"/>
<dbReference type="KEGG" id="dia:Dtpsy_1654"/>
<dbReference type="eggNOG" id="COG0190">
    <property type="taxonomic scope" value="Bacteria"/>
</dbReference>
<dbReference type="HOGENOM" id="CLU_034045_2_1_4"/>
<dbReference type="UniPathway" id="UPA00193"/>
<dbReference type="Proteomes" id="UP000000450">
    <property type="component" value="Chromosome"/>
</dbReference>
<dbReference type="GO" id="GO:0005829">
    <property type="term" value="C:cytosol"/>
    <property type="evidence" value="ECO:0007669"/>
    <property type="project" value="TreeGrafter"/>
</dbReference>
<dbReference type="GO" id="GO:0004477">
    <property type="term" value="F:methenyltetrahydrofolate cyclohydrolase activity"/>
    <property type="evidence" value="ECO:0007669"/>
    <property type="project" value="UniProtKB-UniRule"/>
</dbReference>
<dbReference type="GO" id="GO:0004488">
    <property type="term" value="F:methylenetetrahydrofolate dehydrogenase (NADP+) activity"/>
    <property type="evidence" value="ECO:0007669"/>
    <property type="project" value="UniProtKB-UniRule"/>
</dbReference>
<dbReference type="GO" id="GO:0000105">
    <property type="term" value="P:L-histidine biosynthetic process"/>
    <property type="evidence" value="ECO:0007669"/>
    <property type="project" value="UniProtKB-KW"/>
</dbReference>
<dbReference type="GO" id="GO:0009086">
    <property type="term" value="P:methionine biosynthetic process"/>
    <property type="evidence" value="ECO:0007669"/>
    <property type="project" value="UniProtKB-KW"/>
</dbReference>
<dbReference type="GO" id="GO:0006164">
    <property type="term" value="P:purine nucleotide biosynthetic process"/>
    <property type="evidence" value="ECO:0007669"/>
    <property type="project" value="UniProtKB-KW"/>
</dbReference>
<dbReference type="GO" id="GO:0035999">
    <property type="term" value="P:tetrahydrofolate interconversion"/>
    <property type="evidence" value="ECO:0007669"/>
    <property type="project" value="UniProtKB-UniRule"/>
</dbReference>
<dbReference type="CDD" id="cd01080">
    <property type="entry name" value="NAD_bind_m-THF_DH_Cyclohyd"/>
    <property type="match status" value="1"/>
</dbReference>
<dbReference type="FunFam" id="3.40.50.720:FF:000094">
    <property type="entry name" value="Bifunctional protein FolD"/>
    <property type="match status" value="1"/>
</dbReference>
<dbReference type="FunFam" id="3.40.50.10860:FF:000005">
    <property type="entry name" value="C-1-tetrahydrofolate synthase, cytoplasmic, putative"/>
    <property type="match status" value="1"/>
</dbReference>
<dbReference type="Gene3D" id="3.40.50.10860">
    <property type="entry name" value="Leucine Dehydrogenase, chain A, domain 1"/>
    <property type="match status" value="1"/>
</dbReference>
<dbReference type="Gene3D" id="3.40.50.720">
    <property type="entry name" value="NAD(P)-binding Rossmann-like Domain"/>
    <property type="match status" value="1"/>
</dbReference>
<dbReference type="HAMAP" id="MF_01576">
    <property type="entry name" value="THF_DHG_CYH"/>
    <property type="match status" value="1"/>
</dbReference>
<dbReference type="InterPro" id="IPR046346">
    <property type="entry name" value="Aminoacid_DH-like_N_sf"/>
</dbReference>
<dbReference type="InterPro" id="IPR036291">
    <property type="entry name" value="NAD(P)-bd_dom_sf"/>
</dbReference>
<dbReference type="InterPro" id="IPR000672">
    <property type="entry name" value="THF_DH/CycHdrlase"/>
</dbReference>
<dbReference type="InterPro" id="IPR020630">
    <property type="entry name" value="THF_DH/CycHdrlase_cat_dom"/>
</dbReference>
<dbReference type="InterPro" id="IPR020867">
    <property type="entry name" value="THF_DH/CycHdrlase_CS"/>
</dbReference>
<dbReference type="InterPro" id="IPR020631">
    <property type="entry name" value="THF_DH/CycHdrlase_NAD-bd_dom"/>
</dbReference>
<dbReference type="NCBIfam" id="NF008058">
    <property type="entry name" value="PRK10792.1"/>
    <property type="match status" value="1"/>
</dbReference>
<dbReference type="NCBIfam" id="NF010783">
    <property type="entry name" value="PRK14186.1"/>
    <property type="match status" value="1"/>
</dbReference>
<dbReference type="NCBIfam" id="NF010786">
    <property type="entry name" value="PRK14189.1"/>
    <property type="match status" value="1"/>
</dbReference>
<dbReference type="PANTHER" id="PTHR48099:SF5">
    <property type="entry name" value="C-1-TETRAHYDROFOLATE SYNTHASE, CYTOPLASMIC"/>
    <property type="match status" value="1"/>
</dbReference>
<dbReference type="PANTHER" id="PTHR48099">
    <property type="entry name" value="C-1-TETRAHYDROFOLATE SYNTHASE, CYTOPLASMIC-RELATED"/>
    <property type="match status" value="1"/>
</dbReference>
<dbReference type="Pfam" id="PF00763">
    <property type="entry name" value="THF_DHG_CYH"/>
    <property type="match status" value="1"/>
</dbReference>
<dbReference type="Pfam" id="PF02882">
    <property type="entry name" value="THF_DHG_CYH_C"/>
    <property type="match status" value="1"/>
</dbReference>
<dbReference type="PRINTS" id="PR00085">
    <property type="entry name" value="THFDHDRGNASE"/>
</dbReference>
<dbReference type="SUPFAM" id="SSF53223">
    <property type="entry name" value="Aminoacid dehydrogenase-like, N-terminal domain"/>
    <property type="match status" value="1"/>
</dbReference>
<dbReference type="SUPFAM" id="SSF51735">
    <property type="entry name" value="NAD(P)-binding Rossmann-fold domains"/>
    <property type="match status" value="1"/>
</dbReference>
<dbReference type="PROSITE" id="PS00766">
    <property type="entry name" value="THF_DHG_CYH_1"/>
    <property type="match status" value="1"/>
</dbReference>
<dbReference type="PROSITE" id="PS00767">
    <property type="entry name" value="THF_DHG_CYH_2"/>
    <property type="match status" value="1"/>
</dbReference>
<feature type="chain" id="PRO_1000185610" description="Bifunctional protein FolD">
    <location>
        <begin position="1"/>
        <end position="282"/>
    </location>
</feature>
<feature type="binding site" evidence="1">
    <location>
        <begin position="166"/>
        <end position="168"/>
    </location>
    <ligand>
        <name>NADP(+)</name>
        <dbReference type="ChEBI" id="CHEBI:58349"/>
    </ligand>
</feature>
<feature type="binding site" evidence="1">
    <location>
        <position position="191"/>
    </location>
    <ligand>
        <name>NADP(+)</name>
        <dbReference type="ChEBI" id="CHEBI:58349"/>
    </ligand>
</feature>
<accession>B9MIU6</accession>
<organism>
    <name type="scientific">Acidovorax ebreus (strain TPSY)</name>
    <name type="common">Diaphorobacter sp. (strain TPSY)</name>
    <dbReference type="NCBI Taxonomy" id="535289"/>
    <lineage>
        <taxon>Bacteria</taxon>
        <taxon>Pseudomonadati</taxon>
        <taxon>Pseudomonadota</taxon>
        <taxon>Betaproteobacteria</taxon>
        <taxon>Burkholderiales</taxon>
        <taxon>Comamonadaceae</taxon>
        <taxon>Diaphorobacter</taxon>
    </lineage>
</organism>
<gene>
    <name evidence="1" type="primary">folD</name>
    <name type="ordered locus">Dtpsy_1654</name>
</gene>
<evidence type="ECO:0000255" key="1">
    <source>
        <dbReference type="HAMAP-Rule" id="MF_01576"/>
    </source>
</evidence>
<sequence>MTAQLIDGNALSRQLRTEVAARTAALKSRGITPGLAVVLVGDNPASQVYVRNKVKACEDVGFHSVLEKYDASMSEEQLLARVQALNNDPSIHGILVQLPLPKHIDDHKVIEAISPLKDVDGFHVASAGALMVGQVGFKACTPYGCMKMLESIGMKDLRGKHAVVIGRSNIVGKPMAMMLLAANATVTVCHSGTADLAAMTRQADVVVAAVGKRNVLTADMVKPGAVVIDVGMNRNDEGKLCGDVDFEGVKQVAGYITPVPGGVGPMTITMLLVNTLEAAERL</sequence>
<proteinExistence type="inferred from homology"/>